<organism>
    <name type="scientific">Rhodopseudomonas palustris (strain BisA53)</name>
    <dbReference type="NCBI Taxonomy" id="316055"/>
    <lineage>
        <taxon>Bacteria</taxon>
        <taxon>Pseudomonadati</taxon>
        <taxon>Pseudomonadota</taxon>
        <taxon>Alphaproteobacteria</taxon>
        <taxon>Hyphomicrobiales</taxon>
        <taxon>Nitrobacteraceae</taxon>
        <taxon>Rhodopseudomonas</taxon>
    </lineage>
</organism>
<accession>Q07NF6</accession>
<protein>
    <recommendedName>
        <fullName evidence="1">Indole-3-glycerol phosphate synthase</fullName>
        <shortName evidence="1">IGPS</shortName>
        <ecNumber evidence="1">4.1.1.48</ecNumber>
    </recommendedName>
</protein>
<reference key="1">
    <citation type="submission" date="2006-09" db="EMBL/GenBank/DDBJ databases">
        <title>Complete sequence of Rhodopseudomonas palustris BisA53.</title>
        <authorList>
            <consortium name="US DOE Joint Genome Institute"/>
            <person name="Copeland A."/>
            <person name="Lucas S."/>
            <person name="Lapidus A."/>
            <person name="Barry K."/>
            <person name="Detter J.C."/>
            <person name="Glavina del Rio T."/>
            <person name="Hammon N."/>
            <person name="Israni S."/>
            <person name="Dalin E."/>
            <person name="Tice H."/>
            <person name="Pitluck S."/>
            <person name="Chain P."/>
            <person name="Malfatti S."/>
            <person name="Shin M."/>
            <person name="Vergez L."/>
            <person name="Schmutz J."/>
            <person name="Larimer F."/>
            <person name="Land M."/>
            <person name="Hauser L."/>
            <person name="Pelletier D.A."/>
            <person name="Kyrpides N."/>
            <person name="Kim E."/>
            <person name="Harwood C.S."/>
            <person name="Oda Y."/>
            <person name="Richardson P."/>
        </authorList>
    </citation>
    <scope>NUCLEOTIDE SEQUENCE [LARGE SCALE GENOMIC DNA]</scope>
    <source>
        <strain>BisA53</strain>
    </source>
</reference>
<name>TRPC_RHOP5</name>
<comment type="catalytic activity">
    <reaction evidence="1">
        <text>1-(2-carboxyphenylamino)-1-deoxy-D-ribulose 5-phosphate + H(+) = (1S,2R)-1-C-(indol-3-yl)glycerol 3-phosphate + CO2 + H2O</text>
        <dbReference type="Rhea" id="RHEA:23476"/>
        <dbReference type="ChEBI" id="CHEBI:15377"/>
        <dbReference type="ChEBI" id="CHEBI:15378"/>
        <dbReference type="ChEBI" id="CHEBI:16526"/>
        <dbReference type="ChEBI" id="CHEBI:58613"/>
        <dbReference type="ChEBI" id="CHEBI:58866"/>
        <dbReference type="EC" id="4.1.1.48"/>
    </reaction>
</comment>
<comment type="pathway">
    <text evidence="1">Amino-acid biosynthesis; L-tryptophan biosynthesis; L-tryptophan from chorismate: step 4/5.</text>
</comment>
<comment type="similarity">
    <text evidence="1">Belongs to the TrpC family.</text>
</comment>
<gene>
    <name evidence="1" type="primary">trpC</name>
    <name type="ordered locus">RPE_2590</name>
</gene>
<dbReference type="EC" id="4.1.1.48" evidence="1"/>
<dbReference type="EMBL" id="CP000463">
    <property type="protein sequence ID" value="ABJ06528.1"/>
    <property type="molecule type" value="Genomic_DNA"/>
</dbReference>
<dbReference type="SMR" id="Q07NF6"/>
<dbReference type="STRING" id="316055.RPE_2590"/>
<dbReference type="KEGG" id="rpe:RPE_2590"/>
<dbReference type="eggNOG" id="COG0134">
    <property type="taxonomic scope" value="Bacteria"/>
</dbReference>
<dbReference type="HOGENOM" id="CLU_034247_2_0_5"/>
<dbReference type="OrthoDB" id="9804217at2"/>
<dbReference type="UniPathway" id="UPA00035">
    <property type="reaction ID" value="UER00043"/>
</dbReference>
<dbReference type="GO" id="GO:0004425">
    <property type="term" value="F:indole-3-glycerol-phosphate synthase activity"/>
    <property type="evidence" value="ECO:0007669"/>
    <property type="project" value="UniProtKB-UniRule"/>
</dbReference>
<dbReference type="GO" id="GO:0004640">
    <property type="term" value="F:phosphoribosylanthranilate isomerase activity"/>
    <property type="evidence" value="ECO:0007669"/>
    <property type="project" value="TreeGrafter"/>
</dbReference>
<dbReference type="GO" id="GO:0000162">
    <property type="term" value="P:L-tryptophan biosynthetic process"/>
    <property type="evidence" value="ECO:0007669"/>
    <property type="project" value="UniProtKB-UniRule"/>
</dbReference>
<dbReference type="CDD" id="cd00331">
    <property type="entry name" value="IGPS"/>
    <property type="match status" value="1"/>
</dbReference>
<dbReference type="FunFam" id="3.20.20.70:FF:000024">
    <property type="entry name" value="Indole-3-glycerol phosphate synthase"/>
    <property type="match status" value="1"/>
</dbReference>
<dbReference type="Gene3D" id="3.20.20.70">
    <property type="entry name" value="Aldolase class I"/>
    <property type="match status" value="1"/>
</dbReference>
<dbReference type="HAMAP" id="MF_00134_B">
    <property type="entry name" value="IGPS_B"/>
    <property type="match status" value="1"/>
</dbReference>
<dbReference type="InterPro" id="IPR013785">
    <property type="entry name" value="Aldolase_TIM"/>
</dbReference>
<dbReference type="InterPro" id="IPR045186">
    <property type="entry name" value="Indole-3-glycerol_P_synth"/>
</dbReference>
<dbReference type="InterPro" id="IPR013798">
    <property type="entry name" value="Indole-3-glycerol_P_synth_dom"/>
</dbReference>
<dbReference type="InterPro" id="IPR001468">
    <property type="entry name" value="Indole-3-GlycerolPSynthase_CS"/>
</dbReference>
<dbReference type="InterPro" id="IPR011060">
    <property type="entry name" value="RibuloseP-bd_barrel"/>
</dbReference>
<dbReference type="NCBIfam" id="NF001370">
    <property type="entry name" value="PRK00278.1-2"/>
    <property type="match status" value="1"/>
</dbReference>
<dbReference type="NCBIfam" id="NF001373">
    <property type="entry name" value="PRK00278.1-6"/>
    <property type="match status" value="1"/>
</dbReference>
<dbReference type="NCBIfam" id="NF001377">
    <property type="entry name" value="PRK00278.2-4"/>
    <property type="match status" value="1"/>
</dbReference>
<dbReference type="PANTHER" id="PTHR22854:SF2">
    <property type="entry name" value="INDOLE-3-GLYCEROL-PHOSPHATE SYNTHASE"/>
    <property type="match status" value="1"/>
</dbReference>
<dbReference type="PANTHER" id="PTHR22854">
    <property type="entry name" value="TRYPTOPHAN BIOSYNTHESIS PROTEIN"/>
    <property type="match status" value="1"/>
</dbReference>
<dbReference type="Pfam" id="PF00218">
    <property type="entry name" value="IGPS"/>
    <property type="match status" value="1"/>
</dbReference>
<dbReference type="SUPFAM" id="SSF51366">
    <property type="entry name" value="Ribulose-phoshate binding barrel"/>
    <property type="match status" value="1"/>
</dbReference>
<dbReference type="PROSITE" id="PS00614">
    <property type="entry name" value="IGPS"/>
    <property type="match status" value="1"/>
</dbReference>
<evidence type="ECO:0000255" key="1">
    <source>
        <dbReference type="HAMAP-Rule" id="MF_00134"/>
    </source>
</evidence>
<feature type="chain" id="PRO_1000018544" description="Indole-3-glycerol phosphate synthase">
    <location>
        <begin position="1"/>
        <end position="273"/>
    </location>
</feature>
<sequence length="273" mass="29388">MSDILTRIEAYKREEIAAAKRARPIAELEVAAKTASPPRGFVAAIRRKLAEGDYALIAEIKKASPSKGLIRVDFDPPALAQAYQAGGAACLSVLTDTPSFQGHLDFMVAAREAVALPVLRKDFVYDTYQVVEARAHGADCILIIMAALDDATAKDIEDAAIDLGMDVLIEIHNHDELERALKLRSPMIGVNNRNLRTFDVTLATSEALAPLIPSERLMVGESGIFAPADLARLERVGIATFLVGESLMRQSDVTAATRALLARDAALRPTGTV</sequence>
<keyword id="KW-0028">Amino-acid biosynthesis</keyword>
<keyword id="KW-0057">Aromatic amino acid biosynthesis</keyword>
<keyword id="KW-0210">Decarboxylase</keyword>
<keyword id="KW-0456">Lyase</keyword>
<keyword id="KW-0822">Tryptophan biosynthesis</keyword>
<proteinExistence type="inferred from homology"/>